<feature type="chain" id="PRO_1000021943" description="RNA pyrophosphohydrolase">
    <location>
        <begin position="1"/>
        <end position="177"/>
    </location>
</feature>
<feature type="domain" description="Nudix hydrolase" evidence="1">
    <location>
        <begin position="6"/>
        <end position="149"/>
    </location>
</feature>
<feature type="short sequence motif" description="Nudix box">
    <location>
        <begin position="38"/>
        <end position="59"/>
    </location>
</feature>
<accession>A7MR28</accession>
<keyword id="KW-0378">Hydrolase</keyword>
<keyword id="KW-1185">Reference proteome</keyword>
<reference key="1">
    <citation type="journal article" date="2010" name="PLoS ONE">
        <title>Genome sequence of Cronobacter sakazakii BAA-894 and comparative genomic hybridization analysis with other Cronobacter species.</title>
        <authorList>
            <person name="Kucerova E."/>
            <person name="Clifton S.W."/>
            <person name="Xia X.Q."/>
            <person name="Long F."/>
            <person name="Porwollik S."/>
            <person name="Fulton L."/>
            <person name="Fronick C."/>
            <person name="Minx P."/>
            <person name="Kyung K."/>
            <person name="Warren W."/>
            <person name="Fulton R."/>
            <person name="Feng D."/>
            <person name="Wollam A."/>
            <person name="Shah N."/>
            <person name="Bhonagiri V."/>
            <person name="Nash W.E."/>
            <person name="Hallsworth-Pepin K."/>
            <person name="Wilson R.K."/>
            <person name="McClelland M."/>
            <person name="Forsythe S.J."/>
        </authorList>
    </citation>
    <scope>NUCLEOTIDE SEQUENCE [LARGE SCALE GENOMIC DNA]</scope>
    <source>
        <strain>ATCC BAA-894</strain>
    </source>
</reference>
<gene>
    <name evidence="1" type="primary">rppH</name>
    <name evidence="1" type="synonym">nudH</name>
    <name type="ordered locus">ESA_00479</name>
</gene>
<organism>
    <name type="scientific">Cronobacter sakazakii (strain ATCC BAA-894)</name>
    <name type="common">Enterobacter sakazakii</name>
    <dbReference type="NCBI Taxonomy" id="290339"/>
    <lineage>
        <taxon>Bacteria</taxon>
        <taxon>Pseudomonadati</taxon>
        <taxon>Pseudomonadota</taxon>
        <taxon>Gammaproteobacteria</taxon>
        <taxon>Enterobacterales</taxon>
        <taxon>Enterobacteriaceae</taxon>
        <taxon>Cronobacter</taxon>
    </lineage>
</organism>
<evidence type="ECO:0000255" key="1">
    <source>
        <dbReference type="HAMAP-Rule" id="MF_00298"/>
    </source>
</evidence>
<proteinExistence type="inferred from homology"/>
<dbReference type="EC" id="3.6.1.-" evidence="1"/>
<dbReference type="EMBL" id="CP000783">
    <property type="protein sequence ID" value="ABU75774.1"/>
    <property type="molecule type" value="Genomic_DNA"/>
</dbReference>
<dbReference type="RefSeq" id="WP_004385951.1">
    <property type="nucleotide sequence ID" value="NC_009778.1"/>
</dbReference>
<dbReference type="SMR" id="A7MR28"/>
<dbReference type="GeneID" id="92211888"/>
<dbReference type="KEGG" id="esa:ESA_00479"/>
<dbReference type="HOGENOM" id="CLU_087195_3_2_6"/>
<dbReference type="Proteomes" id="UP000000260">
    <property type="component" value="Chromosome"/>
</dbReference>
<dbReference type="GO" id="GO:0005737">
    <property type="term" value="C:cytoplasm"/>
    <property type="evidence" value="ECO:0007669"/>
    <property type="project" value="TreeGrafter"/>
</dbReference>
<dbReference type="GO" id="GO:0034353">
    <property type="term" value="F:mRNA 5'-diphosphatase activity"/>
    <property type="evidence" value="ECO:0007669"/>
    <property type="project" value="TreeGrafter"/>
</dbReference>
<dbReference type="GO" id="GO:0006402">
    <property type="term" value="P:mRNA catabolic process"/>
    <property type="evidence" value="ECO:0007669"/>
    <property type="project" value="TreeGrafter"/>
</dbReference>
<dbReference type="CDD" id="cd03671">
    <property type="entry name" value="NUDIX_Ap4A_hydrolase_plant_like"/>
    <property type="match status" value="1"/>
</dbReference>
<dbReference type="FunFam" id="3.90.79.10:FF:000001">
    <property type="entry name" value="RNA pyrophosphohydrolase"/>
    <property type="match status" value="1"/>
</dbReference>
<dbReference type="Gene3D" id="3.90.79.10">
    <property type="entry name" value="Nucleoside Triphosphate Pyrophosphohydrolase"/>
    <property type="match status" value="1"/>
</dbReference>
<dbReference type="HAMAP" id="MF_00298">
    <property type="entry name" value="Nudix_RppH"/>
    <property type="match status" value="1"/>
</dbReference>
<dbReference type="InterPro" id="IPR020476">
    <property type="entry name" value="Nudix_hydrolase"/>
</dbReference>
<dbReference type="InterPro" id="IPR015797">
    <property type="entry name" value="NUDIX_hydrolase-like_dom_sf"/>
</dbReference>
<dbReference type="InterPro" id="IPR020084">
    <property type="entry name" value="NUDIX_hydrolase_CS"/>
</dbReference>
<dbReference type="InterPro" id="IPR000086">
    <property type="entry name" value="NUDIX_hydrolase_dom"/>
</dbReference>
<dbReference type="InterPro" id="IPR022927">
    <property type="entry name" value="RppH"/>
</dbReference>
<dbReference type="NCBIfam" id="NF001934">
    <property type="entry name" value="PRK00714.1-1"/>
    <property type="match status" value="1"/>
</dbReference>
<dbReference type="NCBIfam" id="NF001937">
    <property type="entry name" value="PRK00714.1-4"/>
    <property type="match status" value="1"/>
</dbReference>
<dbReference type="NCBIfam" id="NF001938">
    <property type="entry name" value="PRK00714.1-5"/>
    <property type="match status" value="1"/>
</dbReference>
<dbReference type="PANTHER" id="PTHR23114">
    <property type="entry name" value="M7GPPPN-MRNA HYDROLASE"/>
    <property type="match status" value="1"/>
</dbReference>
<dbReference type="PANTHER" id="PTHR23114:SF17">
    <property type="entry name" value="M7GPPPN-MRNA HYDROLASE"/>
    <property type="match status" value="1"/>
</dbReference>
<dbReference type="Pfam" id="PF00293">
    <property type="entry name" value="NUDIX"/>
    <property type="match status" value="1"/>
</dbReference>
<dbReference type="PRINTS" id="PR00502">
    <property type="entry name" value="NUDIXFAMILY"/>
</dbReference>
<dbReference type="SUPFAM" id="SSF55811">
    <property type="entry name" value="Nudix"/>
    <property type="match status" value="1"/>
</dbReference>
<dbReference type="PROSITE" id="PS51462">
    <property type="entry name" value="NUDIX"/>
    <property type="match status" value="1"/>
</dbReference>
<dbReference type="PROSITE" id="PS00893">
    <property type="entry name" value="NUDIX_BOX"/>
    <property type="match status" value="1"/>
</dbReference>
<name>RPPH_CROS8</name>
<comment type="function">
    <text evidence="1">Accelerates the degradation of transcripts by removing pyrophosphate from the 5'-end of triphosphorylated RNA, leading to a more labile monophosphorylated state that can stimulate subsequent ribonuclease cleavage.</text>
</comment>
<comment type="cofactor">
    <cofactor evidence="1">
        <name>a divalent metal cation</name>
        <dbReference type="ChEBI" id="CHEBI:60240"/>
    </cofactor>
</comment>
<comment type="similarity">
    <text evidence="1">Belongs to the Nudix hydrolase family. RppH subfamily.</text>
</comment>
<sequence>MIDDDGYRPNVGIVICNRQGQVMWARRFGQHSWQFPQGGINPGESAEQAMYRELFEEVGLQRKDVRILATTRNWLRYKLPKRLVRWDTKPVCIGQKQKWFLLQLMSNDADINMQTSSTPEFDGWRWVSFWYPVRQVVSFKRDVYRRVMKEFASVVMPLQESAPPQRNPSPAWRRKRG</sequence>
<protein>
    <recommendedName>
        <fullName evidence="1">RNA pyrophosphohydrolase</fullName>
        <ecNumber evidence="1">3.6.1.-</ecNumber>
    </recommendedName>
    <alternativeName>
        <fullName evidence="1">(Di)nucleoside polyphosphate hydrolase</fullName>
    </alternativeName>
</protein>